<keyword id="KW-0158">Chromosome</keyword>
<keyword id="KW-0539">Nucleus</keyword>
<keyword id="KW-1185">Reference proteome</keyword>
<keyword id="KW-0779">Telomere</keyword>
<gene>
    <name type="primary">EST3</name>
    <name type="ordered locus">KLLA0D14289g</name>
</gene>
<accession>Q6CQU2</accession>
<protein>
    <recommendedName>
        <fullName>Telomere replication protein EST3</fullName>
    </recommendedName>
</protein>
<proteinExistence type="inferred from homology"/>
<sequence length="184" mass="21870">MPNVVLSSRLTNNDSVFLQEWIKPSVRPYYLKNEKTKFWPEQRELVTDLLEHDIIESAFQTALNPAPQRFVRIVKFHRVNDYTVYATIRDSTALILCYFTVDCVLDYETINNDRITLNTLNTLFVIGNVTLQFWNHRECKLWFNQDFPGLRMVPVLKIEKARMFDRDQISSNVQFEWVYDTLHG</sequence>
<name>EST3_KLULA</name>
<evidence type="ECO:0000250" key="1"/>
<evidence type="ECO:0000305" key="2"/>
<reference key="1">
    <citation type="journal article" date="2004" name="Nature">
        <title>Genome evolution in yeasts.</title>
        <authorList>
            <person name="Dujon B."/>
            <person name="Sherman D."/>
            <person name="Fischer G."/>
            <person name="Durrens P."/>
            <person name="Casaregola S."/>
            <person name="Lafontaine I."/>
            <person name="de Montigny J."/>
            <person name="Marck C."/>
            <person name="Neuveglise C."/>
            <person name="Talla E."/>
            <person name="Goffard N."/>
            <person name="Frangeul L."/>
            <person name="Aigle M."/>
            <person name="Anthouard V."/>
            <person name="Babour A."/>
            <person name="Barbe V."/>
            <person name="Barnay S."/>
            <person name="Blanchin S."/>
            <person name="Beckerich J.-M."/>
            <person name="Beyne E."/>
            <person name="Bleykasten C."/>
            <person name="Boisrame A."/>
            <person name="Boyer J."/>
            <person name="Cattolico L."/>
            <person name="Confanioleri F."/>
            <person name="de Daruvar A."/>
            <person name="Despons L."/>
            <person name="Fabre E."/>
            <person name="Fairhead C."/>
            <person name="Ferry-Dumazet H."/>
            <person name="Groppi A."/>
            <person name="Hantraye F."/>
            <person name="Hennequin C."/>
            <person name="Jauniaux N."/>
            <person name="Joyet P."/>
            <person name="Kachouri R."/>
            <person name="Kerrest A."/>
            <person name="Koszul R."/>
            <person name="Lemaire M."/>
            <person name="Lesur I."/>
            <person name="Ma L."/>
            <person name="Muller H."/>
            <person name="Nicaud J.-M."/>
            <person name="Nikolski M."/>
            <person name="Oztas S."/>
            <person name="Ozier-Kalogeropoulos O."/>
            <person name="Pellenz S."/>
            <person name="Potier S."/>
            <person name="Richard G.-F."/>
            <person name="Straub M.-L."/>
            <person name="Suleau A."/>
            <person name="Swennen D."/>
            <person name="Tekaia F."/>
            <person name="Wesolowski-Louvel M."/>
            <person name="Westhof E."/>
            <person name="Wirth B."/>
            <person name="Zeniou-Meyer M."/>
            <person name="Zivanovic Y."/>
            <person name="Bolotin-Fukuhara M."/>
            <person name="Thierry A."/>
            <person name="Bouchier C."/>
            <person name="Caudron B."/>
            <person name="Scarpelli C."/>
            <person name="Gaillardin C."/>
            <person name="Weissenbach J."/>
            <person name="Wincker P."/>
            <person name="Souciet J.-L."/>
        </authorList>
    </citation>
    <scope>NUCLEOTIDE SEQUENCE [LARGE SCALE GENOMIC DNA]</scope>
    <source>
        <strain>ATCC 8585 / CBS 2359 / DSM 70799 / NBRC 1267 / NRRL Y-1140 / WM37</strain>
    </source>
</reference>
<feature type="chain" id="PRO_0000301754" description="Telomere replication protein EST3">
    <location>
        <begin position="1"/>
        <end position="184"/>
    </location>
</feature>
<dbReference type="EMBL" id="CR382124">
    <property type="protein sequence ID" value="CAH00793.1"/>
    <property type="molecule type" value="Genomic_DNA"/>
</dbReference>
<dbReference type="RefSeq" id="XP_453697.1">
    <property type="nucleotide sequence ID" value="XM_453697.1"/>
</dbReference>
<dbReference type="SMR" id="Q6CQU2"/>
<dbReference type="FunCoup" id="Q6CQU2">
    <property type="interactions" value="54"/>
</dbReference>
<dbReference type="STRING" id="284590.Q6CQU2"/>
<dbReference type="PaxDb" id="284590-Q6CQU2"/>
<dbReference type="KEGG" id="kla:KLLA0_D14289g"/>
<dbReference type="eggNOG" id="ENOG502S5B8">
    <property type="taxonomic scope" value="Eukaryota"/>
</dbReference>
<dbReference type="HOGENOM" id="CLU_1489823_0_0_1"/>
<dbReference type="InParanoid" id="Q6CQU2"/>
<dbReference type="OMA" id="NCRITSE"/>
<dbReference type="Proteomes" id="UP000000598">
    <property type="component" value="Chromosome D"/>
</dbReference>
<dbReference type="GO" id="GO:0000781">
    <property type="term" value="C:chromosome, telomeric region"/>
    <property type="evidence" value="ECO:0007669"/>
    <property type="project" value="UniProtKB-SubCell"/>
</dbReference>
<dbReference type="GO" id="GO:0005697">
    <property type="term" value="C:telomerase holoenzyme complex"/>
    <property type="evidence" value="ECO:0007669"/>
    <property type="project" value="InterPro"/>
</dbReference>
<dbReference type="GO" id="GO:0042162">
    <property type="term" value="F:telomeric DNA binding"/>
    <property type="evidence" value="ECO:0007669"/>
    <property type="project" value="InterPro"/>
</dbReference>
<dbReference type="GO" id="GO:0007004">
    <property type="term" value="P:telomere maintenance via telomerase"/>
    <property type="evidence" value="ECO:0007669"/>
    <property type="project" value="InterPro"/>
</dbReference>
<dbReference type="Gene3D" id="2.40.50.960">
    <property type="match status" value="1"/>
</dbReference>
<dbReference type="InterPro" id="IPR019437">
    <property type="entry name" value="TPP1/Est3"/>
</dbReference>
<dbReference type="Pfam" id="PF10341">
    <property type="entry name" value="TPP1"/>
    <property type="match status" value="1"/>
</dbReference>
<organism>
    <name type="scientific">Kluyveromyces lactis (strain ATCC 8585 / CBS 2359 / DSM 70799 / NBRC 1267 / NRRL Y-1140 / WM37)</name>
    <name type="common">Yeast</name>
    <name type="synonym">Candida sphaerica</name>
    <dbReference type="NCBI Taxonomy" id="284590"/>
    <lineage>
        <taxon>Eukaryota</taxon>
        <taxon>Fungi</taxon>
        <taxon>Dikarya</taxon>
        <taxon>Ascomycota</taxon>
        <taxon>Saccharomycotina</taxon>
        <taxon>Saccharomycetes</taxon>
        <taxon>Saccharomycetales</taxon>
        <taxon>Saccharomycetaceae</taxon>
        <taxon>Kluyveromyces</taxon>
    </lineage>
</organism>
<comment type="function">
    <text evidence="1">Component of the telomerase complex involved in telomere replication. Stimulates RNA/DNA heteroduplex unwinding which favors the telomere replication by the telomerase (By similarity).</text>
</comment>
<comment type="subunit">
    <text evidence="1">Component of the telomerase complex.</text>
</comment>
<comment type="subcellular location">
    <subcellularLocation>
        <location evidence="2">Nucleus</location>
    </subcellularLocation>
    <subcellularLocation>
        <location evidence="2">Chromosome</location>
        <location evidence="2">Telomere</location>
    </subcellularLocation>
</comment>
<comment type="similarity">
    <text evidence="2">Belongs to the EST3 family.</text>
</comment>